<name>CAVN4_BOVIN</name>
<organism>
    <name type="scientific">Bos taurus</name>
    <name type="common">Bovine</name>
    <dbReference type="NCBI Taxonomy" id="9913"/>
    <lineage>
        <taxon>Eukaryota</taxon>
        <taxon>Metazoa</taxon>
        <taxon>Chordata</taxon>
        <taxon>Craniata</taxon>
        <taxon>Vertebrata</taxon>
        <taxon>Euteleostomi</taxon>
        <taxon>Mammalia</taxon>
        <taxon>Eutheria</taxon>
        <taxon>Laurasiatheria</taxon>
        <taxon>Artiodactyla</taxon>
        <taxon>Ruminantia</taxon>
        <taxon>Pecora</taxon>
        <taxon>Bovidae</taxon>
        <taxon>Bovinae</taxon>
        <taxon>Bos</taxon>
    </lineage>
</organism>
<gene>
    <name type="primary">CAVIN4</name>
    <name type="synonym">MURC</name>
</gene>
<reference key="1">
    <citation type="submission" date="2007-06" db="EMBL/GenBank/DDBJ databases">
        <authorList>
            <consortium name="NIH - Mammalian Gene Collection (MGC) project"/>
        </authorList>
    </citation>
    <scope>NUCLEOTIDE SEQUENCE [LARGE SCALE MRNA]</scope>
    <source>
        <strain>Hereford</strain>
        <tissue>Fetal muscle</tissue>
    </source>
</reference>
<dbReference type="EMBL" id="BC123729">
    <property type="protein sequence ID" value="AAI23730.1"/>
    <property type="status" value="ALT_SEQ"/>
    <property type="molecule type" value="mRNA"/>
</dbReference>
<dbReference type="EMBL" id="BC142126">
    <property type="protein sequence ID" value="AAI42127.1"/>
    <property type="status" value="ALT_INIT"/>
    <property type="molecule type" value="mRNA"/>
</dbReference>
<dbReference type="RefSeq" id="NP_001096734.2">
    <property type="nucleotide sequence ID" value="NM_001103264.1"/>
</dbReference>
<dbReference type="RefSeq" id="XP_059745106.1">
    <property type="nucleotide sequence ID" value="XM_059889123.1"/>
</dbReference>
<dbReference type="SMR" id="A5PJI6"/>
<dbReference type="FunCoup" id="A5PJI6">
    <property type="interactions" value="99"/>
</dbReference>
<dbReference type="STRING" id="9913.ENSBTAP00000029327"/>
<dbReference type="PaxDb" id="9913-ENSBTAP00000029327"/>
<dbReference type="Ensembl" id="ENSBTAT00000029327.5">
    <property type="protein sequence ID" value="ENSBTAP00000029327.4"/>
    <property type="gene ID" value="ENSBTAG00000021992.7"/>
</dbReference>
<dbReference type="GeneID" id="528386"/>
<dbReference type="KEGG" id="bta:528386"/>
<dbReference type="CTD" id="347273"/>
<dbReference type="VEuPathDB" id="HostDB:ENSBTAG00000021992"/>
<dbReference type="VGNC" id="VGNC:26805">
    <property type="gene designation" value="CAVIN4"/>
</dbReference>
<dbReference type="eggNOG" id="ENOG502QQ9A">
    <property type="taxonomic scope" value="Eukaryota"/>
</dbReference>
<dbReference type="GeneTree" id="ENSGT00950000182910"/>
<dbReference type="HOGENOM" id="CLU_065589_1_0_1"/>
<dbReference type="InParanoid" id="A5PJI6"/>
<dbReference type="OMA" id="AFCPPDD"/>
<dbReference type="OrthoDB" id="8924144at2759"/>
<dbReference type="TreeFam" id="TF331031"/>
<dbReference type="Proteomes" id="UP000009136">
    <property type="component" value="Chromosome 8"/>
</dbReference>
<dbReference type="Bgee" id="ENSBTAG00000021992">
    <property type="expression patterns" value="Expressed in biceps femoris and 88 other cell types or tissues"/>
</dbReference>
<dbReference type="GO" id="GO:0005901">
    <property type="term" value="C:caveola"/>
    <property type="evidence" value="ECO:0000250"/>
    <property type="project" value="UniProtKB"/>
</dbReference>
<dbReference type="GO" id="GO:0005737">
    <property type="term" value="C:cytoplasm"/>
    <property type="evidence" value="ECO:0000318"/>
    <property type="project" value="GO_Central"/>
</dbReference>
<dbReference type="GO" id="GO:0005829">
    <property type="term" value="C:cytosol"/>
    <property type="evidence" value="ECO:0007669"/>
    <property type="project" value="UniProtKB-SubCell"/>
</dbReference>
<dbReference type="GO" id="GO:0005886">
    <property type="term" value="C:plasma membrane"/>
    <property type="evidence" value="ECO:0000250"/>
    <property type="project" value="UniProtKB"/>
</dbReference>
<dbReference type="GO" id="GO:0042383">
    <property type="term" value="C:sarcolemma"/>
    <property type="evidence" value="ECO:0007669"/>
    <property type="project" value="UniProtKB-SubCell"/>
</dbReference>
<dbReference type="GO" id="GO:0016528">
    <property type="term" value="C:sarcoplasm"/>
    <property type="evidence" value="ECO:0007669"/>
    <property type="project" value="Ensembl"/>
</dbReference>
<dbReference type="GO" id="GO:0030018">
    <property type="term" value="C:Z disc"/>
    <property type="evidence" value="ECO:0007669"/>
    <property type="project" value="Ensembl"/>
</dbReference>
<dbReference type="GO" id="GO:0030154">
    <property type="term" value="P:cell differentiation"/>
    <property type="evidence" value="ECO:0007669"/>
    <property type="project" value="UniProtKB-KW"/>
</dbReference>
<dbReference type="GO" id="GO:0007517">
    <property type="term" value="P:muscle organ development"/>
    <property type="evidence" value="ECO:0007669"/>
    <property type="project" value="UniProtKB-KW"/>
</dbReference>
<dbReference type="GO" id="GO:0045944">
    <property type="term" value="P:positive regulation of transcription by RNA polymerase II"/>
    <property type="evidence" value="ECO:0007669"/>
    <property type="project" value="Ensembl"/>
</dbReference>
<dbReference type="GO" id="GO:0010468">
    <property type="term" value="P:regulation of gene expression"/>
    <property type="evidence" value="ECO:0000318"/>
    <property type="project" value="GO_Central"/>
</dbReference>
<dbReference type="InterPro" id="IPR026752">
    <property type="entry name" value="Cavin_fam"/>
</dbReference>
<dbReference type="PANTHER" id="PTHR15240:SF4">
    <property type="entry name" value="CAVEOLAE-ASSOCIATED PROTEIN 4"/>
    <property type="match status" value="1"/>
</dbReference>
<dbReference type="PANTHER" id="PTHR15240">
    <property type="entry name" value="CAVIN"/>
    <property type="match status" value="1"/>
</dbReference>
<dbReference type="Pfam" id="PF15237">
    <property type="entry name" value="PTRF_SDPR"/>
    <property type="match status" value="1"/>
</dbReference>
<keyword id="KW-0010">Activator</keyword>
<keyword id="KW-1003">Cell membrane</keyword>
<keyword id="KW-0175">Coiled coil</keyword>
<keyword id="KW-0963">Cytoplasm</keyword>
<keyword id="KW-0217">Developmental protein</keyword>
<keyword id="KW-0221">Differentiation</keyword>
<keyword id="KW-0472">Membrane</keyword>
<keyword id="KW-0517">Myogenesis</keyword>
<keyword id="KW-0597">Phosphoprotein</keyword>
<keyword id="KW-1185">Reference proteome</keyword>
<keyword id="KW-0804">Transcription</keyword>
<keyword id="KW-0805">Transcription regulation</keyword>
<proteinExistence type="evidence at transcript level"/>
<sequence length="361" mass="41161">MEHNGSASNADKIHQNRLSNVTEDEDQDAALTIVTVLDKVAAIVDSVQASQKRIEERHRVMENAIKSVQIDLLKFSQSHSNTGYVINKLFEKTRKVSAHIKDVKARVEKQQTHVKKVEAKQEEIMKKNKFRVVIFQEEVQCPTSLSVVKDRSLTESPEEVDEIFDTPVDLSSDEEYFVEESRSARLKKSGKERIDNIKKAFSKENMQKTRQNFDKKVNRIRTRIVTPERRERLRQSGERLRQSGERLKQSGERFKKSISNAAPSREAFKMRSLRKTKDRAVAEGPEEVREMGVDIIARGEALGPISELYPEALSETDPEEASATHPPQEGGEVSTPEPLKVTFKPQVKVEDDESLLLDLKQ</sequence>
<comment type="function">
    <text evidence="1">Modulates the morphology of formed caveolae in cardiomyocytes, but is not required for caveolar formation. Facilitates the recruitment of MAPK1/3 to caveolae within cardiomyocytes and regulates alpha-1 adrenergic receptor-induced hypertrophic responses in cardiomyocytes through MAPK1/3 activation. Contributes to proper membrane localization and stabilization of caveolin-3 (CAV3) in cardiomyocytes. Induces RHOA activation and activates NPPA transcription and myofibrillar organization through the Rho/ROCK signaling pathway.</text>
</comment>
<comment type="subunit">
    <text evidence="1 2 3">Component of the CAVIN complex composed of CAVIN1, CAVIN2, CAVIN3 and CAVIN4. Interacts with CAVIN1, ADRA1A, ADRA1B, MAPK1 and MAPK3. Interacts with CAVIN2; this augments the transactivation of NPPA.</text>
</comment>
<comment type="subcellular location">
    <subcellularLocation>
        <location evidence="1">Cytoplasm</location>
        <location evidence="1">Myofibril</location>
        <location evidence="1">Sarcomere</location>
    </subcellularLocation>
    <subcellularLocation>
        <location evidence="1">Cytoplasm</location>
    </subcellularLocation>
    <subcellularLocation>
        <location evidence="1">Cytoplasm</location>
        <location evidence="1">Cytosol</location>
    </subcellularLocation>
    <subcellularLocation>
        <location evidence="1">Cell membrane</location>
        <location evidence="1">Sarcolemma</location>
    </subcellularLocation>
    <subcellularLocation>
        <location evidence="1">Membrane</location>
        <location evidence="1">Caveola</location>
    </subcellularLocation>
    <text evidence="1">In cardiomyocytes, accumulates in the Z-line of the sarcomere. In vascular smooth muscle cells, detected diffusely throughout the cytoplasm. Localizes in the caveolae in a caveolin-dependent manner.</text>
</comment>
<comment type="similarity">
    <text evidence="6">Belongs to the CAVIN family.</text>
</comment>
<comment type="sequence caution" evidence="6">
    <conflict type="erroneous initiation">
        <sequence resource="EMBL-CDS" id="AAI23730"/>
    </conflict>
    <text>Truncated N-terminus.</text>
</comment>
<comment type="sequence caution" evidence="6">
    <conflict type="frameshift">
        <sequence resource="EMBL-CDS" id="AAI23730"/>
    </conflict>
</comment>
<comment type="sequence caution" evidence="6">
    <conflict type="erroneous initiation">
        <sequence resource="EMBL-CDS" id="AAI42127"/>
    </conflict>
</comment>
<accession>A5PJI6</accession>
<accession>A7YVI0</accession>
<feature type="chain" id="PRO_0000325762" description="Caveolae-associated protein 4">
    <location>
        <begin position="1"/>
        <end position="361"/>
    </location>
</feature>
<feature type="region of interest" description="Disordered" evidence="5">
    <location>
        <begin position="1"/>
        <end position="21"/>
    </location>
</feature>
<feature type="region of interest" description="Disordered" evidence="5">
    <location>
        <begin position="230"/>
        <end position="283"/>
    </location>
</feature>
<feature type="region of interest" description="Disordered" evidence="5">
    <location>
        <begin position="310"/>
        <end position="346"/>
    </location>
</feature>
<feature type="coiled-coil region" evidence="4">
    <location>
        <begin position="100"/>
        <end position="124"/>
    </location>
</feature>
<feature type="coiled-coil region" evidence="4">
    <location>
        <begin position="204"/>
        <end position="248"/>
    </location>
</feature>
<feature type="compositionally biased region" description="Basic and acidic residues" evidence="5">
    <location>
        <begin position="230"/>
        <end position="255"/>
    </location>
</feature>
<feature type="modified residue" description="Phosphoserine" evidence="2">
    <location>
        <position position="152"/>
    </location>
</feature>
<feature type="modified residue" description="Phosphoserine" evidence="2">
    <location>
        <position position="171"/>
    </location>
</feature>
<feature type="modified residue" description="Phosphoserine" evidence="2">
    <location>
        <position position="172"/>
    </location>
</feature>
<feature type="modified residue" description="Phosphothreonine" evidence="1">
    <location>
        <position position="335"/>
    </location>
</feature>
<feature type="modified residue" description="Phosphoserine" evidence="1">
    <location>
        <position position="354"/>
    </location>
</feature>
<evidence type="ECO:0000250" key="1">
    <source>
        <dbReference type="UniProtKB" id="A2AMM0"/>
    </source>
</evidence>
<evidence type="ECO:0000250" key="2">
    <source>
        <dbReference type="UniProtKB" id="B1PRL5"/>
    </source>
</evidence>
<evidence type="ECO:0000250" key="3">
    <source>
        <dbReference type="UniProtKB" id="Q5BKX8"/>
    </source>
</evidence>
<evidence type="ECO:0000255" key="4"/>
<evidence type="ECO:0000256" key="5">
    <source>
        <dbReference type="SAM" id="MobiDB-lite"/>
    </source>
</evidence>
<evidence type="ECO:0000305" key="6"/>
<protein>
    <recommendedName>
        <fullName>Caveolae-associated protein 4</fullName>
    </recommendedName>
    <alternativeName>
        <fullName>Muscle-related coiled-coil protein</fullName>
    </alternativeName>
    <alternativeName>
        <fullName>Muscle-restricted coiled-coil protein</fullName>
    </alternativeName>
</protein>